<protein>
    <recommendedName>
        <fullName>Peridinin-chlorophyll a-binding protein 1, chloroplastic</fullName>
        <shortName>PCP</shortName>
    </recommendedName>
</protein>
<keyword id="KW-0002">3D-structure</keyword>
<keyword id="KW-0148">Chlorophyll</keyword>
<keyword id="KW-0150">Chloroplast</keyword>
<keyword id="KW-0157">Chromophore</keyword>
<keyword id="KW-0903">Direct protein sequencing</keyword>
<keyword id="KW-0437">Light-harvesting polypeptide</keyword>
<keyword id="KW-0934">Plastid</keyword>
<keyword id="KW-0677">Repeat</keyword>
<keyword id="KW-0809">Transit peptide</keyword>
<dbReference type="EMBL" id="Z50792">
    <property type="protein sequence ID" value="CAA90653.1"/>
    <property type="molecule type" value="mRNA"/>
</dbReference>
<dbReference type="EMBL" id="X94549">
    <property type="protein sequence ID" value="CAA64242.1"/>
    <property type="molecule type" value="Genomic_DNA"/>
</dbReference>
<dbReference type="PIR" id="S60187">
    <property type="entry name" value="S60187"/>
</dbReference>
<dbReference type="PDB" id="1PPR">
    <property type="method" value="X-ray"/>
    <property type="resolution" value="2.00 A"/>
    <property type="chains" value="M/N/O=58-369"/>
</dbReference>
<dbReference type="PDB" id="2X1Z">
    <property type="method" value="X-ray"/>
    <property type="resolution" value="1.80 A"/>
    <property type="chains" value="M=57-207"/>
</dbReference>
<dbReference type="PDB" id="2X20">
    <property type="method" value="X-ray"/>
    <property type="resolution" value="1.95 A"/>
    <property type="chains" value="M=57-207"/>
</dbReference>
<dbReference type="PDB" id="2X21">
    <property type="method" value="X-ray"/>
    <property type="resolution" value="1.75 A"/>
    <property type="chains" value="M=57-207"/>
</dbReference>
<dbReference type="PDB" id="3IIS">
    <property type="method" value="X-ray"/>
    <property type="resolution" value="1.40 A"/>
    <property type="chains" value="M=57-207"/>
</dbReference>
<dbReference type="PDB" id="3IIU">
    <property type="method" value="X-ray"/>
    <property type="resolution" value="1.45 A"/>
    <property type="chains" value="M=57-207"/>
</dbReference>
<dbReference type="PDB" id="8OV5">
    <property type="method" value="X-ray"/>
    <property type="resolution" value="1.15 A"/>
    <property type="chains" value="M/N/O=58-369"/>
</dbReference>
<dbReference type="PDBsum" id="1PPR"/>
<dbReference type="PDBsum" id="2X1Z"/>
<dbReference type="PDBsum" id="2X20"/>
<dbReference type="PDBsum" id="2X21"/>
<dbReference type="PDBsum" id="3IIS"/>
<dbReference type="PDBsum" id="3IIU"/>
<dbReference type="PDBsum" id="8OV5"/>
<dbReference type="SMR" id="P80484"/>
<dbReference type="MINT" id="P80484"/>
<dbReference type="EvolutionaryTrace" id="P80484"/>
<dbReference type="GO" id="GO:0009507">
    <property type="term" value="C:chloroplast"/>
    <property type="evidence" value="ECO:0007669"/>
    <property type="project" value="UniProtKB-SubCell"/>
</dbReference>
<dbReference type="GO" id="GO:0030076">
    <property type="term" value="C:light-harvesting complex"/>
    <property type="evidence" value="ECO:0007669"/>
    <property type="project" value="UniProtKB-KW"/>
</dbReference>
<dbReference type="GO" id="GO:0016168">
    <property type="term" value="F:chlorophyll binding"/>
    <property type="evidence" value="ECO:0007669"/>
    <property type="project" value="UniProtKB-KW"/>
</dbReference>
<dbReference type="Gene3D" id="1.40.10.10">
    <property type="entry name" value="Peridinin-chlorophyll A binding"/>
    <property type="match status" value="2"/>
</dbReference>
<dbReference type="InterPro" id="IPR003376">
    <property type="entry name" value="Peridinin-chlorophyll-bd_prot"/>
</dbReference>
<dbReference type="InterPro" id="IPR036550">
    <property type="entry name" value="Peridinin-chlorophyll-bd_sf"/>
</dbReference>
<dbReference type="Pfam" id="PF02429">
    <property type="entry name" value="PCP"/>
    <property type="match status" value="2"/>
</dbReference>
<dbReference type="SUPFAM" id="SSF48608">
    <property type="entry name" value="Peridinin-chlorophyll protein"/>
    <property type="match status" value="2"/>
</dbReference>
<sequence>MVRSGKKAVVLAAVAFCATSVVQKSHGFVPSPLRQRAAAAGAAAASAATMFAPAAFADEIGDAAKKLGDASYAFAKEVDWNNGIFLQAPGKLQPLEALKAIDKMIVMGAAADPKLLKAAAEAHHKAIGSVSGPNGVTSRADWDNVNAALGRVIASVPENMVMDVYDSVSKITDPKVPAYMKSLVSGADAEKAYEGFLAFKDVVKKSQVTSAAGPATVPSGDKIGVAAQQLSEASYPFLKEIDWLSDVYMKPLPGVSAQQSLKAIDKMIVMGAQADGNALKAAAEAHHKAIGSIDATGVTSAADYAAVNAALGRVIASVPKSTVMDVYNAMAGATDTSIPLNMFSKVNPLDANAAAKAFYTFKDVVQAAQR</sequence>
<reference key="1">
    <citation type="journal article" date="1996" name="Biochim. Biophys. Acta">
        <title>Two distinct forms of the peridinin-chlorophyll a-protein from Amphidinium carterae.</title>
        <authorList>
            <person name="Sharples F.P."/>
            <person name="Wrench P.M."/>
            <person name="Ou K."/>
            <person name="Hiller R.G."/>
        </authorList>
    </citation>
    <scope>NUCLEOTIDE SEQUENCE [GENOMIC DNA / MRNA]</scope>
    <scope>PARTIAL PROTEIN SEQUENCE</scope>
    <source>
        <strain>CS21</strain>
    </source>
</reference>
<reference key="2">
    <citation type="journal article" date="1996" name="Science">
        <title>Structural basis of light harvesting by carotenoids: peridinin-chlorophyll-protein from Amphidinium carterae.</title>
        <authorList>
            <person name="Hofmann E."/>
            <person name="Wrench P.M."/>
            <person name="Sharples F.P."/>
            <person name="Hiller R.G."/>
            <person name="Welte W."/>
            <person name="Diederichs K."/>
        </authorList>
    </citation>
    <scope>X-RAY CRYSTALLOGRAPHY (2.0 ANGSTROMS)</scope>
</reference>
<organism>
    <name type="scientific">Amphidinium carterae</name>
    <name type="common">Dinoflagellate</name>
    <dbReference type="NCBI Taxonomy" id="2961"/>
    <lineage>
        <taxon>Eukaryota</taxon>
        <taxon>Sar</taxon>
        <taxon>Alveolata</taxon>
        <taxon>Dinophyceae</taxon>
        <taxon>Amphidiniales</taxon>
        <taxon>Amphidiniaceae</taxon>
        <taxon>Amphidinium</taxon>
    </lineage>
</organism>
<proteinExistence type="evidence at protein level"/>
<accession>P80484</accession>
<accession>P51872</accession>
<feature type="transit peptide" description="Chloroplast">
    <location>
        <begin position="1"/>
        <end position="57"/>
    </location>
</feature>
<feature type="chain" id="PRO_0000022026" description="Peridinin-chlorophyll a-binding protein 1, chloroplastic">
    <location>
        <begin position="58"/>
        <end position="370"/>
    </location>
</feature>
<feature type="repeat" description="1">
    <location>
        <begin position="58"/>
        <end position="220"/>
    </location>
</feature>
<feature type="repeat" description="2">
    <location>
        <begin position="221"/>
        <end position="370"/>
    </location>
</feature>
<feature type="site" description="Chlorophyll a binding">
    <location>
        <position position="123"/>
    </location>
</feature>
<feature type="site" description="Chlorophyll a binding">
    <location>
        <position position="286"/>
    </location>
</feature>
<feature type="sequence conflict" description="In Ref. 1; CAA64242." evidence="1" ref="1">
    <original>A</original>
    <variation>H</variation>
    <location>
        <position position="73"/>
    </location>
</feature>
<feature type="sequence conflict" description="In Ref. 1; CAA64242." evidence="1" ref="1">
    <original>L</original>
    <variation>T</variation>
    <location>
        <position position="98"/>
    </location>
</feature>
<feature type="sequence conflict" description="In Ref. 1; AA sequence." evidence="1" ref="1">
    <original>V</original>
    <variation>I</variation>
    <location>
        <position position="130"/>
    </location>
</feature>
<feature type="sequence conflict" description="In Ref. 1; AA sequence." evidence="1" ref="1">
    <original>W</original>
    <variation>E</variation>
    <location>
        <position position="243"/>
    </location>
</feature>
<feature type="helix" evidence="2">
    <location>
        <begin position="59"/>
        <end position="77"/>
    </location>
</feature>
<feature type="helix" evidence="2">
    <location>
        <begin position="83"/>
        <end position="86"/>
    </location>
</feature>
<feature type="strand" evidence="2">
    <location>
        <begin position="89"/>
        <end position="91"/>
    </location>
</feature>
<feature type="helix" evidence="2">
    <location>
        <begin position="94"/>
        <end position="110"/>
    </location>
</feature>
<feature type="helix" evidence="2">
    <location>
        <begin position="113"/>
        <end position="128"/>
    </location>
</feature>
<feature type="turn" evidence="2">
    <location>
        <begin position="132"/>
        <end position="135"/>
    </location>
</feature>
<feature type="helix" evidence="2">
    <location>
        <begin position="139"/>
        <end position="154"/>
    </location>
</feature>
<feature type="helix" evidence="2">
    <location>
        <begin position="158"/>
        <end position="171"/>
    </location>
</feature>
<feature type="helix" evidence="2">
    <location>
        <begin position="176"/>
        <end position="182"/>
    </location>
</feature>
<feature type="helix" evidence="2">
    <location>
        <begin position="186"/>
        <end position="205"/>
    </location>
</feature>
<feature type="helix" evidence="2">
    <location>
        <begin position="222"/>
        <end position="240"/>
    </location>
</feature>
<feature type="helix" evidence="2">
    <location>
        <begin position="247"/>
        <end position="249"/>
    </location>
</feature>
<feature type="helix" evidence="2">
    <location>
        <begin position="257"/>
        <end position="273"/>
    </location>
</feature>
<feature type="helix" evidence="2">
    <location>
        <begin position="276"/>
        <end position="291"/>
    </location>
</feature>
<feature type="helix" evidence="2">
    <location>
        <begin position="301"/>
        <end position="315"/>
    </location>
</feature>
<feature type="helix" evidence="2">
    <location>
        <begin position="320"/>
        <end position="333"/>
    </location>
</feature>
<feature type="helix" evidence="2">
    <location>
        <begin position="337"/>
        <end position="344"/>
    </location>
</feature>
<feature type="helix" evidence="2">
    <location>
        <begin position="348"/>
        <end position="368"/>
    </location>
</feature>
<name>PCP1_AMPCA</name>
<evidence type="ECO:0000305" key="1"/>
<evidence type="ECO:0007829" key="2">
    <source>
        <dbReference type="PDB" id="8OV5"/>
    </source>
</evidence>
<comment type="function">
    <text>Water-soluble antenna for capture of solar energy in the blue-green range. Peridinin is an asymmetric carotenoid.</text>
</comment>
<comment type="biophysicochemical properties">
    <absorption>
        <max>~480 nm</max>
    </absorption>
</comment>
<comment type="subunit">
    <text>Homotrimer.</text>
</comment>
<comment type="subcellular location">
    <subcellularLocation>
        <location>Plastid</location>
        <location>Chloroplast</location>
    </subcellularLocation>
</comment>
<comment type="domain">
    <text>The mature protein is composed of 2 almost identical repeat units.</text>
</comment>